<feature type="chain" id="PRO_0000077730" description="Uncharacterized immunity region protein 13">
    <location>
        <begin position="1"/>
        <end position="50"/>
    </location>
</feature>
<organismHost>
    <name type="scientific">Bacillus subtilis</name>
    <dbReference type="NCBI Taxonomy" id="1423"/>
</organismHost>
<dbReference type="EMBL" id="M11920">
    <property type="status" value="NOT_ANNOTATED_CDS"/>
    <property type="molecule type" value="Genomic_DNA"/>
</dbReference>
<dbReference type="PIR" id="C27234">
    <property type="entry name" value="IMBP13"/>
</dbReference>
<reference key="1">
    <citation type="journal article" date="1985" name="Gene">
        <title>Nucleotide sequence of the immunity region of Bacillus subtilis bacteriophage phi 105: identification of the repressor gene and its mRNA and protein products.</title>
        <authorList>
            <person name="Cully D.F."/>
            <person name="Garro A.J."/>
        </authorList>
    </citation>
    <scope>NUCLEOTIDE SEQUENCE [GENOMIC DNA]</scope>
</reference>
<protein>
    <recommendedName>
        <fullName>Uncharacterized immunity region protein 13</fullName>
    </recommendedName>
</protein>
<proteinExistence type="predicted"/>
<accession>P10436</accession>
<organism>
    <name type="scientific">Bacillus phage phi105</name>
    <name type="common">Bacteriophage phi-105</name>
    <dbReference type="NCBI Taxonomy" id="10717"/>
    <lineage>
        <taxon>Viruses</taxon>
        <taxon>Duplodnaviria</taxon>
        <taxon>Heunggongvirae</taxon>
        <taxon>Uroviricota</taxon>
        <taxon>Caudoviricetes</taxon>
        <taxon>Spizizenvirus</taxon>
        <taxon>Spizizenvirus sv105</taxon>
    </lineage>
</organism>
<name>YIMD_BPPH1</name>
<sequence length="50" mass="5515">MGSPEKLRPSDFSKSFLISSIRFAMSFSSFELYSACSSLIRVSSPTMAET</sequence>